<proteinExistence type="inferred from homology"/>
<reference key="1">
    <citation type="journal article" date="2007" name="Nature">
        <title>Evolution of genes and genomes on the Drosophila phylogeny.</title>
        <authorList>
            <consortium name="Drosophila 12 genomes consortium"/>
        </authorList>
    </citation>
    <scope>NUCLEOTIDE SEQUENCE [LARGE SCALE GENOMIC DNA]</scope>
    <source>
        <strain>Tucson 14024-0371.13</strain>
    </source>
</reference>
<organism>
    <name type="scientific">Drosophila ananassae</name>
    <name type="common">Fruit fly</name>
    <dbReference type="NCBI Taxonomy" id="7217"/>
    <lineage>
        <taxon>Eukaryota</taxon>
        <taxon>Metazoa</taxon>
        <taxon>Ecdysozoa</taxon>
        <taxon>Arthropoda</taxon>
        <taxon>Hexapoda</taxon>
        <taxon>Insecta</taxon>
        <taxon>Pterygota</taxon>
        <taxon>Neoptera</taxon>
        <taxon>Endopterygota</taxon>
        <taxon>Diptera</taxon>
        <taxon>Brachycera</taxon>
        <taxon>Muscomorpha</taxon>
        <taxon>Ephydroidea</taxon>
        <taxon>Drosophilidae</taxon>
        <taxon>Drosophila</taxon>
        <taxon>Sophophora</taxon>
    </lineage>
</organism>
<gene>
    <name type="ORF">GF11203</name>
</gene>
<dbReference type="EMBL" id="CH902619">
    <property type="protein sequence ID" value="EDV37863.1"/>
    <property type="molecule type" value="Genomic_DNA"/>
</dbReference>
<dbReference type="SMR" id="B3MGU5"/>
<dbReference type="FunCoup" id="B3MGU5">
    <property type="interactions" value="1287"/>
</dbReference>
<dbReference type="STRING" id="7217.B3MGU5"/>
<dbReference type="EnsemblMetazoa" id="FBtr0115903">
    <property type="protein sequence ID" value="FBpp0114395"/>
    <property type="gene ID" value="FBgn0088243"/>
</dbReference>
<dbReference type="EnsemblMetazoa" id="XM_001961005.4">
    <property type="protein sequence ID" value="XP_001961041.1"/>
    <property type="gene ID" value="LOC6494067"/>
</dbReference>
<dbReference type="GeneID" id="6494067"/>
<dbReference type="KEGG" id="dan:6494067"/>
<dbReference type="eggNOG" id="KOG3326">
    <property type="taxonomic scope" value="Eukaryota"/>
</dbReference>
<dbReference type="HOGENOM" id="CLU_103054_0_2_1"/>
<dbReference type="InParanoid" id="B3MGU5"/>
<dbReference type="OMA" id="YGKPQNP"/>
<dbReference type="OrthoDB" id="284292at2759"/>
<dbReference type="PhylomeDB" id="B3MGU5"/>
<dbReference type="Proteomes" id="UP000007801">
    <property type="component" value="Unassembled WGS sequence"/>
</dbReference>
<dbReference type="GO" id="GO:0005759">
    <property type="term" value="C:mitochondrial matrix"/>
    <property type="evidence" value="ECO:0007669"/>
    <property type="project" value="UniProtKB-SubCell"/>
</dbReference>
<dbReference type="GO" id="GO:0005739">
    <property type="term" value="C:mitochondrion"/>
    <property type="evidence" value="ECO:0000250"/>
    <property type="project" value="UniProtKB"/>
</dbReference>
<dbReference type="GO" id="GO:0055070">
    <property type="term" value="P:copper ion homeostasis"/>
    <property type="evidence" value="ECO:0007669"/>
    <property type="project" value="EnsemblMetazoa"/>
</dbReference>
<dbReference type="GO" id="GO:0006121">
    <property type="term" value="P:mitochondrial electron transport, succinate to ubiquinone"/>
    <property type="evidence" value="ECO:0000250"/>
    <property type="project" value="UniProtKB"/>
</dbReference>
<dbReference type="GO" id="GO:0034553">
    <property type="term" value="P:mitochondrial respiratory chain complex II assembly"/>
    <property type="evidence" value="ECO:0007669"/>
    <property type="project" value="TreeGrafter"/>
</dbReference>
<dbReference type="GO" id="GO:0018293">
    <property type="term" value="P:protein-FAD linkage"/>
    <property type="evidence" value="ECO:0000250"/>
    <property type="project" value="UniProtKB"/>
</dbReference>
<dbReference type="GO" id="GO:0006099">
    <property type="term" value="P:tricarboxylic acid cycle"/>
    <property type="evidence" value="ECO:0007669"/>
    <property type="project" value="TreeGrafter"/>
</dbReference>
<dbReference type="FunFam" id="1.10.150.250:FF:000002">
    <property type="entry name" value="Succinate dehydrogenase assembly factor 2, mitochondrial"/>
    <property type="match status" value="1"/>
</dbReference>
<dbReference type="Gene3D" id="1.10.150.250">
    <property type="entry name" value="Flavinator of succinate dehydrogenase"/>
    <property type="match status" value="1"/>
</dbReference>
<dbReference type="HAMAP" id="MF_03057">
    <property type="entry name" value="SDHAF2"/>
    <property type="match status" value="1"/>
</dbReference>
<dbReference type="InterPro" id="IPR005631">
    <property type="entry name" value="SDH"/>
</dbReference>
<dbReference type="InterPro" id="IPR036714">
    <property type="entry name" value="SDH_sf"/>
</dbReference>
<dbReference type="InterPro" id="IPR028882">
    <property type="entry name" value="SDHAF2"/>
</dbReference>
<dbReference type="PANTHER" id="PTHR12469">
    <property type="entry name" value="PROTEIN EMI5 HOMOLOG, MITOCHONDRIAL"/>
    <property type="match status" value="1"/>
</dbReference>
<dbReference type="PANTHER" id="PTHR12469:SF2">
    <property type="entry name" value="SUCCINATE DEHYDROGENASE ASSEMBLY FACTOR 2, MITOCHONDRIAL"/>
    <property type="match status" value="1"/>
</dbReference>
<dbReference type="Pfam" id="PF03937">
    <property type="entry name" value="Sdh5"/>
    <property type="match status" value="1"/>
</dbReference>
<dbReference type="SUPFAM" id="SSF109910">
    <property type="entry name" value="YgfY-like"/>
    <property type="match status" value="1"/>
</dbReference>
<protein>
    <recommendedName>
        <fullName evidence="1">Succinate dehydrogenase assembly factor 2-B, mitochondrial</fullName>
        <shortName evidence="1">SDH assembly factor 2_B</shortName>
        <shortName evidence="1">SDHAF2-B</shortName>
    </recommendedName>
</protein>
<comment type="function">
    <text evidence="1">Plays an essential role in the assembly of succinate dehydrogenase (SDH), an enzyme complex (also referred to as respiratory complex II) that is a component of both the tricarboxylic acid (TCA) cycle and the mitochondrial electron transport chain, and which couples the oxidation of succinate to fumarate with the reduction of ubiquinone (coenzyme Q) to ubiquinol. Required for flavinylation (covalent attachment of FAD) of the flavoprotein subunit of the SDH catalytic dimer.</text>
</comment>
<comment type="subunit">
    <text evidence="1">Interacts with the flavoprotein subunit within the SDH catalytic dimer.</text>
</comment>
<comment type="subcellular location">
    <subcellularLocation>
        <location evidence="1">Mitochondrion matrix</location>
    </subcellularLocation>
</comment>
<comment type="similarity">
    <text evidence="1">Belongs to the SDHAF2 family.</text>
</comment>
<name>SDF2B_DROAN</name>
<feature type="transit peptide" description="Mitochondrion" evidence="1">
    <location>
        <begin position="1"/>
        <end position="23"/>
    </location>
</feature>
<feature type="chain" id="PRO_0000383163" description="Succinate dehydrogenase assembly factor 2-B, mitochondrial">
    <location>
        <begin position="24"/>
        <end position="163"/>
    </location>
</feature>
<keyword id="KW-0143">Chaperone</keyword>
<keyword id="KW-0496">Mitochondrion</keyword>
<keyword id="KW-1185">Reference proteome</keyword>
<keyword id="KW-0809">Transit peptide</keyword>
<sequence length="163" mass="19303">MFRQLRLTMDISGWIFMPWRRSLSNKQSPPPPLASTINDVIVDYDDPDYLPLPEYPVRPNEPLDIRKQRLLYQSRKRGMLENDLLLSTFAAKYLDNFNAEQTAQYDQLINGVSNDWDIYYWATDVKPTPKEYDTEIMRLLKDHVKNAERISRIRQPDLYSSES</sequence>
<accession>B3MGU5</accession>
<evidence type="ECO:0000255" key="1">
    <source>
        <dbReference type="HAMAP-Rule" id="MF_03057"/>
    </source>
</evidence>